<accession>P0A258</accession>
<accession>P26974</accession>
<organism>
    <name type="scientific">Salmonella typhi</name>
    <dbReference type="NCBI Taxonomy" id="90370"/>
    <lineage>
        <taxon>Bacteria</taxon>
        <taxon>Pseudomonadati</taxon>
        <taxon>Pseudomonadota</taxon>
        <taxon>Gammaproteobacteria</taxon>
        <taxon>Enterobacterales</taxon>
        <taxon>Enterobacteriaceae</taxon>
        <taxon>Salmonella</taxon>
    </lineage>
</organism>
<dbReference type="EC" id="2.3.1.51"/>
<dbReference type="EMBL" id="AL513382">
    <property type="protein sequence ID" value="CAD03005.1"/>
    <property type="molecule type" value="Genomic_DNA"/>
</dbReference>
<dbReference type="EMBL" id="AE014613">
    <property type="protein sequence ID" value="AAO70638.1"/>
    <property type="molecule type" value="Genomic_DNA"/>
</dbReference>
<dbReference type="RefSeq" id="NP_457566.1">
    <property type="nucleotide sequence ID" value="NC_003198.1"/>
</dbReference>
<dbReference type="RefSeq" id="WP_000965730.1">
    <property type="nucleotide sequence ID" value="NZ_WSUR01000003.1"/>
</dbReference>
<dbReference type="SMR" id="P0A258"/>
<dbReference type="STRING" id="220341.gene:17587208"/>
<dbReference type="KEGG" id="stt:t3094"/>
<dbReference type="KEGG" id="sty:STY3350"/>
<dbReference type="PATRIC" id="fig|220341.7.peg.3410"/>
<dbReference type="eggNOG" id="COG0204">
    <property type="taxonomic scope" value="Bacteria"/>
</dbReference>
<dbReference type="HOGENOM" id="CLU_027938_10_3_6"/>
<dbReference type="OMA" id="KKSLVWI"/>
<dbReference type="OrthoDB" id="5290997at2"/>
<dbReference type="UniPathway" id="UPA00557">
    <property type="reaction ID" value="UER00613"/>
</dbReference>
<dbReference type="Proteomes" id="UP000000541">
    <property type="component" value="Chromosome"/>
</dbReference>
<dbReference type="Proteomes" id="UP000002670">
    <property type="component" value="Chromosome"/>
</dbReference>
<dbReference type="GO" id="GO:0005886">
    <property type="term" value="C:plasma membrane"/>
    <property type="evidence" value="ECO:0007669"/>
    <property type="project" value="UniProtKB-SubCell"/>
</dbReference>
<dbReference type="GO" id="GO:0003841">
    <property type="term" value="F:1-acylglycerol-3-phosphate O-acyltransferase activity"/>
    <property type="evidence" value="ECO:0007669"/>
    <property type="project" value="UniProtKB-EC"/>
</dbReference>
<dbReference type="GO" id="GO:0016024">
    <property type="term" value="P:CDP-diacylglycerol biosynthetic process"/>
    <property type="evidence" value="ECO:0007669"/>
    <property type="project" value="UniProtKB-UniPathway"/>
</dbReference>
<dbReference type="GO" id="GO:0006654">
    <property type="term" value="P:phosphatidic acid biosynthetic process"/>
    <property type="evidence" value="ECO:0007669"/>
    <property type="project" value="TreeGrafter"/>
</dbReference>
<dbReference type="CDD" id="cd07989">
    <property type="entry name" value="LPLAT_AGPAT-like"/>
    <property type="match status" value="1"/>
</dbReference>
<dbReference type="InterPro" id="IPR004552">
    <property type="entry name" value="AGP_acyltrans"/>
</dbReference>
<dbReference type="InterPro" id="IPR002123">
    <property type="entry name" value="Plipid/glycerol_acylTrfase"/>
</dbReference>
<dbReference type="NCBIfam" id="TIGR00530">
    <property type="entry name" value="AGP_acyltrn"/>
    <property type="match status" value="1"/>
</dbReference>
<dbReference type="NCBIfam" id="NF011593">
    <property type="entry name" value="PRK15018.1"/>
    <property type="match status" value="1"/>
</dbReference>
<dbReference type="PANTHER" id="PTHR10434">
    <property type="entry name" value="1-ACYL-SN-GLYCEROL-3-PHOSPHATE ACYLTRANSFERASE"/>
    <property type="match status" value="1"/>
</dbReference>
<dbReference type="PANTHER" id="PTHR10434:SF11">
    <property type="entry name" value="1-ACYL-SN-GLYCEROL-3-PHOSPHATE ACYLTRANSFERASE"/>
    <property type="match status" value="1"/>
</dbReference>
<dbReference type="Pfam" id="PF01553">
    <property type="entry name" value="Acyltransferase"/>
    <property type="match status" value="1"/>
</dbReference>
<dbReference type="SMART" id="SM00563">
    <property type="entry name" value="PlsC"/>
    <property type="match status" value="1"/>
</dbReference>
<dbReference type="SUPFAM" id="SSF69593">
    <property type="entry name" value="Glycerol-3-phosphate (1)-acyltransferase"/>
    <property type="match status" value="1"/>
</dbReference>
<comment type="function">
    <text evidence="1">Converts lysophosphatidic acid (LPA) into phosphatidic acid by incorporating an acyl moiety at the 2 position. This enzyme can utilize either acyl-CoA or acyl-acyl-carrier-protein as the fatty acyl donor (By similarity).</text>
</comment>
<comment type="catalytic activity">
    <reaction>
        <text>a 1-acyl-sn-glycero-3-phosphate + an acyl-CoA = a 1,2-diacyl-sn-glycero-3-phosphate + CoA</text>
        <dbReference type="Rhea" id="RHEA:19709"/>
        <dbReference type="ChEBI" id="CHEBI:57287"/>
        <dbReference type="ChEBI" id="CHEBI:57970"/>
        <dbReference type="ChEBI" id="CHEBI:58342"/>
        <dbReference type="ChEBI" id="CHEBI:58608"/>
        <dbReference type="EC" id="2.3.1.51"/>
    </reaction>
</comment>
<comment type="pathway">
    <text>Phospholipid metabolism; CDP-diacylglycerol biosynthesis; CDP-diacylglycerol from sn-glycerol 3-phosphate: step 2/3.</text>
</comment>
<comment type="subcellular location">
    <subcellularLocation>
        <location evidence="1">Cell inner membrane</location>
        <topology evidence="1">Peripheral membrane protein</topology>
    </subcellularLocation>
</comment>
<comment type="domain">
    <text evidence="1">The HXXXXD motif is essential for acyltransferase activity and may constitute the binding site for the phosphate moiety of the glycerol-3-phosphate.</text>
</comment>
<comment type="similarity">
    <text evidence="2">Belongs to the 1-acyl-sn-glycerol-3-phosphate acyltransferase family.</text>
</comment>
<reference key="1">
    <citation type="journal article" date="2001" name="Nature">
        <title>Complete genome sequence of a multiple drug resistant Salmonella enterica serovar Typhi CT18.</title>
        <authorList>
            <person name="Parkhill J."/>
            <person name="Dougan G."/>
            <person name="James K.D."/>
            <person name="Thomson N.R."/>
            <person name="Pickard D."/>
            <person name="Wain J."/>
            <person name="Churcher C.M."/>
            <person name="Mungall K.L."/>
            <person name="Bentley S.D."/>
            <person name="Holden M.T.G."/>
            <person name="Sebaihia M."/>
            <person name="Baker S."/>
            <person name="Basham D."/>
            <person name="Brooks K."/>
            <person name="Chillingworth T."/>
            <person name="Connerton P."/>
            <person name="Cronin A."/>
            <person name="Davis P."/>
            <person name="Davies R.M."/>
            <person name="Dowd L."/>
            <person name="White N."/>
            <person name="Farrar J."/>
            <person name="Feltwell T."/>
            <person name="Hamlin N."/>
            <person name="Haque A."/>
            <person name="Hien T.T."/>
            <person name="Holroyd S."/>
            <person name="Jagels K."/>
            <person name="Krogh A."/>
            <person name="Larsen T.S."/>
            <person name="Leather S."/>
            <person name="Moule S."/>
            <person name="O'Gaora P."/>
            <person name="Parry C."/>
            <person name="Quail M.A."/>
            <person name="Rutherford K.M."/>
            <person name="Simmonds M."/>
            <person name="Skelton J."/>
            <person name="Stevens K."/>
            <person name="Whitehead S."/>
            <person name="Barrell B.G."/>
        </authorList>
    </citation>
    <scope>NUCLEOTIDE SEQUENCE [LARGE SCALE GENOMIC DNA]</scope>
    <source>
        <strain>CT18</strain>
    </source>
</reference>
<reference key="2">
    <citation type="journal article" date="2003" name="J. Bacteriol.">
        <title>Comparative genomics of Salmonella enterica serovar Typhi strains Ty2 and CT18.</title>
        <authorList>
            <person name="Deng W."/>
            <person name="Liou S.-R."/>
            <person name="Plunkett G. III"/>
            <person name="Mayhew G.F."/>
            <person name="Rose D.J."/>
            <person name="Burland V."/>
            <person name="Kodoyianni V."/>
            <person name="Schwartz D.C."/>
            <person name="Blattner F.R."/>
        </authorList>
    </citation>
    <scope>NUCLEOTIDE SEQUENCE [LARGE SCALE GENOMIC DNA]</scope>
    <source>
        <strain>ATCC 700931 / Ty2</strain>
    </source>
</reference>
<name>PLSC_SALTI</name>
<sequence>MLYIFRLIVTVIYSILVCVFGSIYCLFSPRNPKHVATFGHMFGRLAPLFGLKVECRKPADAENYGNAIYIANHQNNYDMVTAANIVQPPTVTVGKKSLLWIPFFGQLYWLTGNLLIDRNNRAKAHSTIAAVVNHFKKRRISIWMFPEGTRSRGRGLLPFKTGAFHAAIAAGVPIIPVCVSNTSNKVNLNRLNNGLVIVEMLPPVDVSEYGKDQVRELAAHCRALMEQKIAELDKEVAEREATGKV</sequence>
<proteinExistence type="inferred from homology"/>
<feature type="chain" id="PRO_0000208177" description="1-acyl-sn-glycerol-3-phosphate acyltransferase">
    <location>
        <begin position="1"/>
        <end position="245"/>
    </location>
</feature>
<feature type="short sequence motif" description="HXXXXD motif">
    <location>
        <begin position="73"/>
        <end position="78"/>
    </location>
</feature>
<gene>
    <name type="primary">plsC</name>
    <name type="synonym">parF</name>
    <name type="ordered locus">STY3350</name>
    <name type="ordered locus">t3094</name>
</gene>
<protein>
    <recommendedName>
        <fullName>1-acyl-sn-glycerol-3-phosphate acyltransferase</fullName>
        <shortName>1-AGP acyltransferase</shortName>
        <shortName>1-AGPAT</shortName>
        <ecNumber>2.3.1.51</ecNumber>
    </recommendedName>
    <alternativeName>
        <fullName>Lysophosphatidic acid acyltransferase</fullName>
        <shortName>LPAAT</shortName>
    </alternativeName>
</protein>
<keyword id="KW-0012">Acyltransferase</keyword>
<keyword id="KW-0997">Cell inner membrane</keyword>
<keyword id="KW-1003">Cell membrane</keyword>
<keyword id="KW-0444">Lipid biosynthesis</keyword>
<keyword id="KW-0443">Lipid metabolism</keyword>
<keyword id="KW-0472">Membrane</keyword>
<keyword id="KW-0594">Phospholipid biosynthesis</keyword>
<keyword id="KW-1208">Phospholipid metabolism</keyword>
<keyword id="KW-0808">Transferase</keyword>
<evidence type="ECO:0000250" key="1"/>
<evidence type="ECO:0000305" key="2"/>